<reference key="1">
    <citation type="journal article" date="2011" name="J. Bacteriol.">
        <title>Complete genome sequence and updated annotation of Desulfovibrio alaskensis G20.</title>
        <authorList>
            <person name="Hauser L.J."/>
            <person name="Land M.L."/>
            <person name="Brown S.D."/>
            <person name="Larimer F."/>
            <person name="Keller K.L."/>
            <person name="Rapp-Giles B.J."/>
            <person name="Price M.N."/>
            <person name="Lin M."/>
            <person name="Bruce D.C."/>
            <person name="Detter J.C."/>
            <person name="Tapia R."/>
            <person name="Han C.S."/>
            <person name="Goodwin L.A."/>
            <person name="Cheng J.F."/>
            <person name="Pitluck S."/>
            <person name="Copeland A."/>
            <person name="Lucas S."/>
            <person name="Nolan M."/>
            <person name="Lapidus A.L."/>
            <person name="Palumbo A.V."/>
            <person name="Wall J.D."/>
        </authorList>
    </citation>
    <scope>NUCLEOTIDE SEQUENCE [LARGE SCALE GENOMIC DNA]</scope>
    <source>
        <strain>ATCC BAA-1058 / DSM 17464 / G20</strain>
    </source>
</reference>
<sequence>MLKPEWSRYIDLLHKEVVPALGCTEPVAVALAAAHAAATLGRTPDRIEVKVSGNLLKNGMGVGVPGTGTTGMNIAAAVGALGGDPQRGLEVLAGLTPEQAEAGRQMVAEGRVDVSVAQGAPLLYAEVTVTGGGHTARSVLVHEHSNIVRLERDGETVFSVPVQDLSQGGVEEKWPLTMAAIHEFATQAPYDAIAFILEAARLNEAIAVEGLAREYGLKVGRTIDENIRKHLMSDDVSTLAVKLTAAASDARMAGVSLPVMSNSGSGNQGITCTMPVVAFAKRLESSDEELARALIMSHLTSIHMKHRLGRLSALCGATVAAAAAGCGIVLLMGGGMEQVDRTIRNMVGNVAGMICDGAKTGCAMKVASAVSAGVQSAMLAMDGIGIDRREGIVEDDIELCIANLARLGSDGMQEADRVVLDIMVSKKP</sequence>
<feature type="chain" id="PRO_0000339813" description="UPF0597 protein Dde_0807">
    <location>
        <begin position="1"/>
        <end position="428"/>
    </location>
</feature>
<evidence type="ECO:0000255" key="1">
    <source>
        <dbReference type="HAMAP-Rule" id="MF_01845"/>
    </source>
</evidence>
<gene>
    <name type="ordered locus">Dde_0807</name>
</gene>
<accession>Q314N8</accession>
<proteinExistence type="inferred from homology"/>
<protein>
    <recommendedName>
        <fullName evidence="1">UPF0597 protein Dde_0807</fullName>
    </recommendedName>
</protein>
<name>Y807_OLEA2</name>
<dbReference type="EMBL" id="CP000112">
    <property type="protein sequence ID" value="ABB37608.1"/>
    <property type="molecule type" value="Genomic_DNA"/>
</dbReference>
<dbReference type="RefSeq" id="WP_011366869.1">
    <property type="nucleotide sequence ID" value="NC_007519.1"/>
</dbReference>
<dbReference type="SMR" id="Q314N8"/>
<dbReference type="STRING" id="207559.Dde_0807"/>
<dbReference type="KEGG" id="dde:Dde_0807"/>
<dbReference type="eggNOG" id="COG3681">
    <property type="taxonomic scope" value="Bacteria"/>
</dbReference>
<dbReference type="HOGENOM" id="CLU_051840_0_0_7"/>
<dbReference type="Proteomes" id="UP000002710">
    <property type="component" value="Chromosome"/>
</dbReference>
<dbReference type="GO" id="GO:0080146">
    <property type="term" value="F:L-cysteine desulfhydrase activity"/>
    <property type="evidence" value="ECO:0007669"/>
    <property type="project" value="TreeGrafter"/>
</dbReference>
<dbReference type="GO" id="GO:0019450">
    <property type="term" value="P:L-cysteine catabolic process to pyruvate"/>
    <property type="evidence" value="ECO:0007669"/>
    <property type="project" value="TreeGrafter"/>
</dbReference>
<dbReference type="HAMAP" id="MF_01845">
    <property type="entry name" value="UPF0597"/>
    <property type="match status" value="1"/>
</dbReference>
<dbReference type="InterPro" id="IPR005130">
    <property type="entry name" value="Ser_deHydtase-like_asu"/>
</dbReference>
<dbReference type="InterPro" id="IPR021144">
    <property type="entry name" value="UPF0597"/>
</dbReference>
<dbReference type="PANTHER" id="PTHR30501">
    <property type="entry name" value="UPF0597 PROTEIN YHAM"/>
    <property type="match status" value="1"/>
</dbReference>
<dbReference type="PANTHER" id="PTHR30501:SF2">
    <property type="entry name" value="UPF0597 PROTEIN YHAM"/>
    <property type="match status" value="1"/>
</dbReference>
<dbReference type="Pfam" id="PF03313">
    <property type="entry name" value="SDH_alpha"/>
    <property type="match status" value="1"/>
</dbReference>
<dbReference type="PIRSF" id="PIRSF006054">
    <property type="entry name" value="UCP006054"/>
    <property type="match status" value="1"/>
</dbReference>
<keyword id="KW-1185">Reference proteome</keyword>
<comment type="similarity">
    <text evidence="1">Belongs to the UPF0597 family.</text>
</comment>
<organism>
    <name type="scientific">Oleidesulfovibrio alaskensis (strain ATCC BAA-1058 / DSM 17464 / G20)</name>
    <name type="common">Desulfovibrio alaskensis</name>
    <dbReference type="NCBI Taxonomy" id="207559"/>
    <lineage>
        <taxon>Bacteria</taxon>
        <taxon>Pseudomonadati</taxon>
        <taxon>Thermodesulfobacteriota</taxon>
        <taxon>Desulfovibrionia</taxon>
        <taxon>Desulfovibrionales</taxon>
        <taxon>Desulfovibrionaceae</taxon>
        <taxon>Oleidesulfovibrio</taxon>
    </lineage>
</organism>